<accession>Q6CQB5</accession>
<organism>
    <name type="scientific">Kluyveromyces lactis (strain ATCC 8585 / CBS 2359 / DSM 70799 / NBRC 1267 / NRRL Y-1140 / WM37)</name>
    <name type="common">Yeast</name>
    <name type="synonym">Candida sphaerica</name>
    <dbReference type="NCBI Taxonomy" id="284590"/>
    <lineage>
        <taxon>Eukaryota</taxon>
        <taxon>Fungi</taxon>
        <taxon>Dikarya</taxon>
        <taxon>Ascomycota</taxon>
        <taxon>Saccharomycotina</taxon>
        <taxon>Saccharomycetes</taxon>
        <taxon>Saccharomycetales</taxon>
        <taxon>Saccharomycetaceae</taxon>
        <taxon>Kluyveromyces</taxon>
    </lineage>
</organism>
<feature type="chain" id="PRO_0000212944" description="Palmitoyltransferase ERF2">
    <location>
        <begin position="1"/>
        <end position="355"/>
    </location>
</feature>
<feature type="topological domain" description="Cytoplasmic" evidence="5">
    <location>
        <begin position="1"/>
        <end position="72"/>
    </location>
</feature>
<feature type="transmembrane region" description="Helical" evidence="5">
    <location>
        <begin position="73"/>
        <end position="93"/>
    </location>
</feature>
<feature type="topological domain" description="Lumenal" evidence="5">
    <location>
        <begin position="94"/>
        <end position="108"/>
    </location>
</feature>
<feature type="transmembrane region" description="Helical" evidence="5">
    <location>
        <begin position="109"/>
        <end position="129"/>
    </location>
</feature>
<feature type="topological domain" description="Cytoplasmic" evidence="5">
    <location>
        <begin position="130"/>
        <end position="215"/>
    </location>
</feature>
<feature type="transmembrane region" description="Helical" evidence="5">
    <location>
        <begin position="216"/>
        <end position="236"/>
    </location>
</feature>
<feature type="topological domain" description="Lumenal" evidence="5">
    <location>
        <begin position="237"/>
        <end position="249"/>
    </location>
</feature>
<feature type="transmembrane region" description="Helical" evidence="5">
    <location>
        <begin position="250"/>
        <end position="270"/>
    </location>
</feature>
<feature type="topological domain" description="Cytoplasmic" evidence="5">
    <location>
        <begin position="271"/>
        <end position="355"/>
    </location>
</feature>
<feature type="domain" description="DHHC" evidence="6">
    <location>
        <begin position="172"/>
        <end position="222"/>
    </location>
</feature>
<feature type="region of interest" description="Disordered" evidence="7">
    <location>
        <begin position="1"/>
        <end position="23"/>
    </location>
</feature>
<feature type="compositionally biased region" description="Basic and acidic residues" evidence="7">
    <location>
        <begin position="1"/>
        <end position="15"/>
    </location>
</feature>
<feature type="active site" description="S-palmitoyl cysteine intermediate" evidence="3">
    <location>
        <position position="202"/>
    </location>
</feature>
<keyword id="KW-0012">Acyltransferase</keyword>
<keyword id="KW-0256">Endoplasmic reticulum</keyword>
<keyword id="KW-0449">Lipoprotein</keyword>
<keyword id="KW-0472">Membrane</keyword>
<keyword id="KW-0564">Palmitate</keyword>
<keyword id="KW-1185">Reference proteome</keyword>
<keyword id="KW-0808">Transferase</keyword>
<keyword id="KW-0812">Transmembrane</keyword>
<keyword id="KW-1133">Transmembrane helix</keyword>
<gene>
    <name type="primary">ERF2</name>
    <name type="ordered locus">KLLA0D18370g</name>
</gene>
<protein>
    <recommendedName>
        <fullName>Palmitoyltransferase ERF2</fullName>
        <ecNumber evidence="3">2.3.1.225</ecNumber>
    </recommendedName>
    <alternativeName>
        <fullName>DHHC cysteine-rich domain-containing protein ERF2</fullName>
    </alternativeName>
    <alternativeName>
        <fullName>Ras protein acyltransferase</fullName>
    </alternativeName>
</protein>
<proteinExistence type="inferred from homology"/>
<comment type="function">
    <text evidence="2">The ERF2-ERF4 complex is a palmitoyltransferase specific for Ras proteins.</text>
</comment>
<comment type="catalytic activity">
    <reaction evidence="3">
        <text>L-cysteinyl-[protein] + hexadecanoyl-CoA = S-hexadecanoyl-L-cysteinyl-[protein] + CoA</text>
        <dbReference type="Rhea" id="RHEA:36683"/>
        <dbReference type="Rhea" id="RHEA-COMP:10131"/>
        <dbReference type="Rhea" id="RHEA-COMP:11032"/>
        <dbReference type="ChEBI" id="CHEBI:29950"/>
        <dbReference type="ChEBI" id="CHEBI:57287"/>
        <dbReference type="ChEBI" id="CHEBI:57379"/>
        <dbReference type="ChEBI" id="CHEBI:74151"/>
        <dbReference type="EC" id="2.3.1.225"/>
    </reaction>
</comment>
<comment type="subunit">
    <text evidence="1">Interacts with ERF4.</text>
</comment>
<comment type="subcellular location">
    <subcellularLocation>
        <location evidence="2">Endoplasmic reticulum membrane</location>
        <topology evidence="2">Multi-pass membrane protein</topology>
    </subcellularLocation>
</comment>
<comment type="domain">
    <text evidence="2">The DHHC domain is required for palmitoyltransferase activity.</text>
</comment>
<comment type="PTM">
    <text evidence="4">Autopalmitoylated.</text>
</comment>
<comment type="similarity">
    <text evidence="8">Belongs to the DHHC palmitoyltransferase family. ERF2/ZDHHC9 subfamily.</text>
</comment>
<reference key="1">
    <citation type="journal article" date="2004" name="Nature">
        <title>Genome evolution in yeasts.</title>
        <authorList>
            <person name="Dujon B."/>
            <person name="Sherman D."/>
            <person name="Fischer G."/>
            <person name="Durrens P."/>
            <person name="Casaregola S."/>
            <person name="Lafontaine I."/>
            <person name="de Montigny J."/>
            <person name="Marck C."/>
            <person name="Neuveglise C."/>
            <person name="Talla E."/>
            <person name="Goffard N."/>
            <person name="Frangeul L."/>
            <person name="Aigle M."/>
            <person name="Anthouard V."/>
            <person name="Babour A."/>
            <person name="Barbe V."/>
            <person name="Barnay S."/>
            <person name="Blanchin S."/>
            <person name="Beckerich J.-M."/>
            <person name="Beyne E."/>
            <person name="Bleykasten C."/>
            <person name="Boisrame A."/>
            <person name="Boyer J."/>
            <person name="Cattolico L."/>
            <person name="Confanioleri F."/>
            <person name="de Daruvar A."/>
            <person name="Despons L."/>
            <person name="Fabre E."/>
            <person name="Fairhead C."/>
            <person name="Ferry-Dumazet H."/>
            <person name="Groppi A."/>
            <person name="Hantraye F."/>
            <person name="Hennequin C."/>
            <person name="Jauniaux N."/>
            <person name="Joyet P."/>
            <person name="Kachouri R."/>
            <person name="Kerrest A."/>
            <person name="Koszul R."/>
            <person name="Lemaire M."/>
            <person name="Lesur I."/>
            <person name="Ma L."/>
            <person name="Muller H."/>
            <person name="Nicaud J.-M."/>
            <person name="Nikolski M."/>
            <person name="Oztas S."/>
            <person name="Ozier-Kalogeropoulos O."/>
            <person name="Pellenz S."/>
            <person name="Potier S."/>
            <person name="Richard G.-F."/>
            <person name="Straub M.-L."/>
            <person name="Suleau A."/>
            <person name="Swennen D."/>
            <person name="Tekaia F."/>
            <person name="Wesolowski-Louvel M."/>
            <person name="Westhof E."/>
            <person name="Wirth B."/>
            <person name="Zeniou-Meyer M."/>
            <person name="Zivanovic Y."/>
            <person name="Bolotin-Fukuhara M."/>
            <person name="Thierry A."/>
            <person name="Bouchier C."/>
            <person name="Caudron B."/>
            <person name="Scarpelli C."/>
            <person name="Gaillardin C."/>
            <person name="Weissenbach J."/>
            <person name="Wincker P."/>
            <person name="Souciet J.-L."/>
        </authorList>
    </citation>
    <scope>NUCLEOTIDE SEQUENCE [LARGE SCALE GENOMIC DNA]</scope>
    <source>
        <strain>ATCC 8585 / CBS 2359 / DSM 70799 / NBRC 1267 / NRRL Y-1140 / WM37</strain>
    </source>
</reference>
<sequence length="355" mass="41904">MIERFMRNDKDRPSARDGQQNGTNDDSYFVKFLHWIITLDTYDGSSRNYGRMTETTNYTFFFGGRVRTVTKTSVYSIVVFAMFIVPLILFSIFECNYLWHHKGTNWKPAIVILYYFYLLTICSFLRAACSDPGIVPRNVHIPDLNASYKIPQEYYNYAILPTKNPNASVSMKYCQTCRIWRPPRSAHCSVCDVCVLSHDHHCKWLNNCIGKRNYRFFLEFLMASTISCILLILLSSFRLSYSPQVRYTPVSLLIICYCGLGIWYPLILFIYHIFLAGTQQTTHEYLRSIGSKHPIFHKITRNRDSPYDRNSMFFNLIHLWFQERGWNLVDPRRKQHYPADIRFRKLPEAHSFETV</sequence>
<dbReference type="EC" id="2.3.1.225" evidence="3"/>
<dbReference type="EMBL" id="CR382124">
    <property type="protein sequence ID" value="CAH00970.1"/>
    <property type="molecule type" value="Genomic_DNA"/>
</dbReference>
<dbReference type="RefSeq" id="XP_453874.1">
    <property type="nucleotide sequence ID" value="XM_453874.1"/>
</dbReference>
<dbReference type="SMR" id="Q6CQB5"/>
<dbReference type="FunCoup" id="Q6CQB5">
    <property type="interactions" value="185"/>
</dbReference>
<dbReference type="STRING" id="284590.Q6CQB5"/>
<dbReference type="PaxDb" id="284590-Q6CQB5"/>
<dbReference type="KEGG" id="kla:KLLA0_D18370g"/>
<dbReference type="eggNOG" id="KOG1311">
    <property type="taxonomic scope" value="Eukaryota"/>
</dbReference>
<dbReference type="HOGENOM" id="CLU_047581_0_0_1"/>
<dbReference type="InParanoid" id="Q6CQB5"/>
<dbReference type="OMA" id="YVTMFLI"/>
<dbReference type="Proteomes" id="UP000000598">
    <property type="component" value="Chromosome D"/>
</dbReference>
<dbReference type="GO" id="GO:0005789">
    <property type="term" value="C:endoplasmic reticulum membrane"/>
    <property type="evidence" value="ECO:0007669"/>
    <property type="project" value="UniProtKB-SubCell"/>
</dbReference>
<dbReference type="GO" id="GO:0005794">
    <property type="term" value="C:Golgi apparatus"/>
    <property type="evidence" value="ECO:0007669"/>
    <property type="project" value="TreeGrafter"/>
</dbReference>
<dbReference type="GO" id="GO:0019706">
    <property type="term" value="F:protein-cysteine S-palmitoyltransferase activity"/>
    <property type="evidence" value="ECO:0007669"/>
    <property type="project" value="UniProtKB-EC"/>
</dbReference>
<dbReference type="GO" id="GO:0006612">
    <property type="term" value="P:protein targeting to membrane"/>
    <property type="evidence" value="ECO:0007669"/>
    <property type="project" value="TreeGrafter"/>
</dbReference>
<dbReference type="InterPro" id="IPR001594">
    <property type="entry name" value="Palmitoyltrfase_DHHC"/>
</dbReference>
<dbReference type="InterPro" id="IPR039859">
    <property type="entry name" value="PFA4/ZDH16/20/ERF2-like"/>
</dbReference>
<dbReference type="PANTHER" id="PTHR22883:SF43">
    <property type="entry name" value="PALMITOYLTRANSFERASE APP"/>
    <property type="match status" value="1"/>
</dbReference>
<dbReference type="PANTHER" id="PTHR22883">
    <property type="entry name" value="ZINC FINGER DHHC DOMAIN CONTAINING PROTEIN"/>
    <property type="match status" value="1"/>
</dbReference>
<dbReference type="Pfam" id="PF01529">
    <property type="entry name" value="DHHC"/>
    <property type="match status" value="1"/>
</dbReference>
<dbReference type="PROSITE" id="PS50216">
    <property type="entry name" value="DHHC"/>
    <property type="match status" value="1"/>
</dbReference>
<evidence type="ECO:0000250" key="1"/>
<evidence type="ECO:0000250" key="2">
    <source>
        <dbReference type="UniProtKB" id="Q06551"/>
    </source>
</evidence>
<evidence type="ECO:0000250" key="3">
    <source>
        <dbReference type="UniProtKB" id="Q8VDZ4"/>
    </source>
</evidence>
<evidence type="ECO:0000250" key="4">
    <source>
        <dbReference type="UniProtKB" id="Q9UIJ5"/>
    </source>
</evidence>
<evidence type="ECO:0000255" key="5"/>
<evidence type="ECO:0000255" key="6">
    <source>
        <dbReference type="PROSITE-ProRule" id="PRU00067"/>
    </source>
</evidence>
<evidence type="ECO:0000256" key="7">
    <source>
        <dbReference type="SAM" id="MobiDB-lite"/>
    </source>
</evidence>
<evidence type="ECO:0000305" key="8"/>
<name>ERFB_KLULA</name>